<comment type="function">
    <text evidence="1">Involved in the biosynthesis of the chorismate, which leads to the biosynthesis of aromatic amino acids. Catalyzes the reversible NADPH linked reduction of 3-dehydroshikimate (DHSA) to yield shikimate (SA).</text>
</comment>
<comment type="catalytic activity">
    <reaction evidence="1">
        <text>shikimate + NADP(+) = 3-dehydroshikimate + NADPH + H(+)</text>
        <dbReference type="Rhea" id="RHEA:17737"/>
        <dbReference type="ChEBI" id="CHEBI:15378"/>
        <dbReference type="ChEBI" id="CHEBI:16630"/>
        <dbReference type="ChEBI" id="CHEBI:36208"/>
        <dbReference type="ChEBI" id="CHEBI:57783"/>
        <dbReference type="ChEBI" id="CHEBI:58349"/>
        <dbReference type="EC" id="1.1.1.25"/>
    </reaction>
</comment>
<comment type="pathway">
    <text evidence="1">Metabolic intermediate biosynthesis; chorismate biosynthesis; chorismate from D-erythrose 4-phosphate and phosphoenolpyruvate: step 4/7.</text>
</comment>
<comment type="subunit">
    <text evidence="1">Homodimer.</text>
</comment>
<comment type="similarity">
    <text evidence="1">Belongs to the shikimate dehydrogenase family.</text>
</comment>
<feature type="chain" id="PRO_1000124884" description="Shikimate dehydrogenase (NADP(+))">
    <location>
        <begin position="1"/>
        <end position="272"/>
    </location>
</feature>
<feature type="active site" description="Proton acceptor" evidence="1">
    <location>
        <position position="65"/>
    </location>
</feature>
<feature type="binding site" evidence="1">
    <location>
        <begin position="14"/>
        <end position="16"/>
    </location>
    <ligand>
        <name>shikimate</name>
        <dbReference type="ChEBI" id="CHEBI:36208"/>
    </ligand>
</feature>
<feature type="binding site" evidence="1">
    <location>
        <position position="61"/>
    </location>
    <ligand>
        <name>shikimate</name>
        <dbReference type="ChEBI" id="CHEBI:36208"/>
    </ligand>
</feature>
<feature type="binding site" evidence="1">
    <location>
        <position position="77"/>
    </location>
    <ligand>
        <name>NADP(+)</name>
        <dbReference type="ChEBI" id="CHEBI:58349"/>
    </ligand>
</feature>
<feature type="binding site" evidence="1">
    <location>
        <position position="86"/>
    </location>
    <ligand>
        <name>shikimate</name>
        <dbReference type="ChEBI" id="CHEBI:36208"/>
    </ligand>
</feature>
<feature type="binding site" evidence="1">
    <location>
        <position position="102"/>
    </location>
    <ligand>
        <name>shikimate</name>
        <dbReference type="ChEBI" id="CHEBI:36208"/>
    </ligand>
</feature>
<feature type="binding site" evidence="1">
    <location>
        <begin position="126"/>
        <end position="130"/>
    </location>
    <ligand>
        <name>NADP(+)</name>
        <dbReference type="ChEBI" id="CHEBI:58349"/>
    </ligand>
</feature>
<feature type="binding site" evidence="1">
    <location>
        <begin position="149"/>
        <end position="154"/>
    </location>
    <ligand>
        <name>NADP(+)</name>
        <dbReference type="ChEBI" id="CHEBI:58349"/>
    </ligand>
</feature>
<feature type="binding site" evidence="1">
    <location>
        <position position="213"/>
    </location>
    <ligand>
        <name>NADP(+)</name>
        <dbReference type="ChEBI" id="CHEBI:58349"/>
    </ligand>
</feature>
<feature type="binding site" evidence="1">
    <location>
        <position position="215"/>
    </location>
    <ligand>
        <name>shikimate</name>
        <dbReference type="ChEBI" id="CHEBI:36208"/>
    </ligand>
</feature>
<feature type="binding site" evidence="1">
    <location>
        <position position="237"/>
    </location>
    <ligand>
        <name>NADP(+)</name>
        <dbReference type="ChEBI" id="CHEBI:58349"/>
    </ligand>
</feature>
<proteinExistence type="inferred from homology"/>
<reference key="1">
    <citation type="journal article" date="2009" name="PLoS Genet.">
        <title>Organised genome dynamics in the Escherichia coli species results in highly diverse adaptive paths.</title>
        <authorList>
            <person name="Touchon M."/>
            <person name="Hoede C."/>
            <person name="Tenaillon O."/>
            <person name="Barbe V."/>
            <person name="Baeriswyl S."/>
            <person name="Bidet P."/>
            <person name="Bingen E."/>
            <person name="Bonacorsi S."/>
            <person name="Bouchier C."/>
            <person name="Bouvet O."/>
            <person name="Calteau A."/>
            <person name="Chiapello H."/>
            <person name="Clermont O."/>
            <person name="Cruveiller S."/>
            <person name="Danchin A."/>
            <person name="Diard M."/>
            <person name="Dossat C."/>
            <person name="Karoui M.E."/>
            <person name="Frapy E."/>
            <person name="Garry L."/>
            <person name="Ghigo J.M."/>
            <person name="Gilles A.M."/>
            <person name="Johnson J."/>
            <person name="Le Bouguenec C."/>
            <person name="Lescat M."/>
            <person name="Mangenot S."/>
            <person name="Martinez-Jehanne V."/>
            <person name="Matic I."/>
            <person name="Nassif X."/>
            <person name="Oztas S."/>
            <person name="Petit M.A."/>
            <person name="Pichon C."/>
            <person name="Rouy Z."/>
            <person name="Ruf C.S."/>
            <person name="Schneider D."/>
            <person name="Tourret J."/>
            <person name="Vacherie B."/>
            <person name="Vallenet D."/>
            <person name="Medigue C."/>
            <person name="Rocha E.P.C."/>
            <person name="Denamur E."/>
        </authorList>
    </citation>
    <scope>NUCLEOTIDE SEQUENCE [LARGE SCALE GENOMIC DNA]</scope>
    <source>
        <strain>55989 / EAEC</strain>
    </source>
</reference>
<protein>
    <recommendedName>
        <fullName evidence="1">Shikimate dehydrogenase (NADP(+))</fullName>
        <shortName evidence="1">SDH</shortName>
        <ecNumber evidence="1">1.1.1.25</ecNumber>
    </recommendedName>
</protein>
<accession>B7LHX9</accession>
<gene>
    <name evidence="1" type="primary">aroE</name>
    <name type="ordered locus">EC55989_3698</name>
</gene>
<name>AROE_ECO55</name>
<dbReference type="EC" id="1.1.1.25" evidence="1"/>
<dbReference type="EMBL" id="CU928145">
    <property type="protein sequence ID" value="CAU99973.1"/>
    <property type="molecule type" value="Genomic_DNA"/>
</dbReference>
<dbReference type="RefSeq" id="WP_000451211.1">
    <property type="nucleotide sequence ID" value="NC_011748.1"/>
</dbReference>
<dbReference type="SMR" id="B7LHX9"/>
<dbReference type="GeneID" id="75204136"/>
<dbReference type="KEGG" id="eck:EC55989_3698"/>
<dbReference type="HOGENOM" id="CLU_044063_2_1_6"/>
<dbReference type="UniPathway" id="UPA00053">
    <property type="reaction ID" value="UER00087"/>
</dbReference>
<dbReference type="Proteomes" id="UP000000746">
    <property type="component" value="Chromosome"/>
</dbReference>
<dbReference type="GO" id="GO:0005829">
    <property type="term" value="C:cytosol"/>
    <property type="evidence" value="ECO:0007669"/>
    <property type="project" value="TreeGrafter"/>
</dbReference>
<dbReference type="GO" id="GO:0050661">
    <property type="term" value="F:NADP binding"/>
    <property type="evidence" value="ECO:0007669"/>
    <property type="project" value="InterPro"/>
</dbReference>
<dbReference type="GO" id="GO:0004764">
    <property type="term" value="F:shikimate 3-dehydrogenase (NADP+) activity"/>
    <property type="evidence" value="ECO:0007669"/>
    <property type="project" value="UniProtKB-UniRule"/>
</dbReference>
<dbReference type="GO" id="GO:0008652">
    <property type="term" value="P:amino acid biosynthetic process"/>
    <property type="evidence" value="ECO:0007669"/>
    <property type="project" value="UniProtKB-KW"/>
</dbReference>
<dbReference type="GO" id="GO:0009073">
    <property type="term" value="P:aromatic amino acid family biosynthetic process"/>
    <property type="evidence" value="ECO:0007669"/>
    <property type="project" value="UniProtKB-KW"/>
</dbReference>
<dbReference type="GO" id="GO:0009423">
    <property type="term" value="P:chorismate biosynthetic process"/>
    <property type="evidence" value="ECO:0007669"/>
    <property type="project" value="UniProtKB-UniRule"/>
</dbReference>
<dbReference type="GO" id="GO:0019632">
    <property type="term" value="P:shikimate metabolic process"/>
    <property type="evidence" value="ECO:0007669"/>
    <property type="project" value="InterPro"/>
</dbReference>
<dbReference type="CDD" id="cd01065">
    <property type="entry name" value="NAD_bind_Shikimate_DH"/>
    <property type="match status" value="1"/>
</dbReference>
<dbReference type="FunFam" id="3.40.50.10860:FF:000006">
    <property type="entry name" value="Shikimate dehydrogenase (NADP(+))"/>
    <property type="match status" value="1"/>
</dbReference>
<dbReference type="FunFam" id="3.40.50.720:FF:000104">
    <property type="entry name" value="Shikimate dehydrogenase (NADP(+))"/>
    <property type="match status" value="1"/>
</dbReference>
<dbReference type="Gene3D" id="3.40.50.10860">
    <property type="entry name" value="Leucine Dehydrogenase, chain A, domain 1"/>
    <property type="match status" value="1"/>
</dbReference>
<dbReference type="Gene3D" id="3.40.50.720">
    <property type="entry name" value="NAD(P)-binding Rossmann-like Domain"/>
    <property type="match status" value="1"/>
</dbReference>
<dbReference type="HAMAP" id="MF_00222">
    <property type="entry name" value="Shikimate_DH_AroE"/>
    <property type="match status" value="1"/>
</dbReference>
<dbReference type="InterPro" id="IPR046346">
    <property type="entry name" value="Aminoacid_DH-like_N_sf"/>
</dbReference>
<dbReference type="InterPro" id="IPR036291">
    <property type="entry name" value="NAD(P)-bd_dom_sf"/>
</dbReference>
<dbReference type="InterPro" id="IPR041121">
    <property type="entry name" value="SDH_C"/>
</dbReference>
<dbReference type="InterPro" id="IPR011342">
    <property type="entry name" value="Shikimate_DH"/>
</dbReference>
<dbReference type="InterPro" id="IPR013708">
    <property type="entry name" value="Shikimate_DH-bd_N"/>
</dbReference>
<dbReference type="InterPro" id="IPR022893">
    <property type="entry name" value="Shikimate_DH_fam"/>
</dbReference>
<dbReference type="InterPro" id="IPR006151">
    <property type="entry name" value="Shikm_DH/Glu-tRNA_Rdtase"/>
</dbReference>
<dbReference type="NCBIfam" id="TIGR00507">
    <property type="entry name" value="aroE"/>
    <property type="match status" value="1"/>
</dbReference>
<dbReference type="NCBIfam" id="NF001310">
    <property type="entry name" value="PRK00258.1-2"/>
    <property type="match status" value="1"/>
</dbReference>
<dbReference type="PANTHER" id="PTHR21089:SF1">
    <property type="entry name" value="BIFUNCTIONAL 3-DEHYDROQUINATE DEHYDRATASE_SHIKIMATE DEHYDROGENASE, CHLOROPLASTIC"/>
    <property type="match status" value="1"/>
</dbReference>
<dbReference type="PANTHER" id="PTHR21089">
    <property type="entry name" value="SHIKIMATE DEHYDROGENASE"/>
    <property type="match status" value="1"/>
</dbReference>
<dbReference type="Pfam" id="PF18317">
    <property type="entry name" value="SDH_C"/>
    <property type="match status" value="1"/>
</dbReference>
<dbReference type="Pfam" id="PF01488">
    <property type="entry name" value="Shikimate_DH"/>
    <property type="match status" value="1"/>
</dbReference>
<dbReference type="Pfam" id="PF08501">
    <property type="entry name" value="Shikimate_dh_N"/>
    <property type="match status" value="1"/>
</dbReference>
<dbReference type="SUPFAM" id="SSF53223">
    <property type="entry name" value="Aminoacid dehydrogenase-like, N-terminal domain"/>
    <property type="match status" value="1"/>
</dbReference>
<dbReference type="SUPFAM" id="SSF51735">
    <property type="entry name" value="NAD(P)-binding Rossmann-fold domains"/>
    <property type="match status" value="1"/>
</dbReference>
<keyword id="KW-0028">Amino-acid biosynthesis</keyword>
<keyword id="KW-0057">Aromatic amino acid biosynthesis</keyword>
<keyword id="KW-0521">NADP</keyword>
<keyword id="KW-0560">Oxidoreductase</keyword>
<keyword id="KW-1185">Reference proteome</keyword>
<sequence>METYAVFGNPIAHSKSPFIHQQFAQQLNIEHPYGRVLAPINDFINTLNAFFRAGGKGANVTVPFKEEAFARADELTERAALAGAVNTLKRLEDGRLLGDNTDGIGLLSDLERLSFIRPGLRILLIGAGGASRGVLLPLLSLDCAVTITNRTVSRAEELAKLFAHTGSIQALGMDELEGHEFDLIINATSSGISGDIPAIPSSLIHPGIYCYDMFYQKGKTPFLAWCEQRGSKRNADGLGMLVAQAAHAFLLWHGVLPDVEPVIKQLQEELSA</sequence>
<evidence type="ECO:0000255" key="1">
    <source>
        <dbReference type="HAMAP-Rule" id="MF_00222"/>
    </source>
</evidence>
<organism>
    <name type="scientific">Escherichia coli (strain 55989 / EAEC)</name>
    <dbReference type="NCBI Taxonomy" id="585055"/>
    <lineage>
        <taxon>Bacteria</taxon>
        <taxon>Pseudomonadati</taxon>
        <taxon>Pseudomonadota</taxon>
        <taxon>Gammaproteobacteria</taxon>
        <taxon>Enterobacterales</taxon>
        <taxon>Enterobacteriaceae</taxon>
        <taxon>Escherichia</taxon>
    </lineage>
</organism>